<reference key="1">
    <citation type="submission" date="2008-02" db="EMBL/GenBank/DDBJ databases">
        <title>Complete sequence of Escherichia coli C str. ATCC 8739.</title>
        <authorList>
            <person name="Copeland A."/>
            <person name="Lucas S."/>
            <person name="Lapidus A."/>
            <person name="Glavina del Rio T."/>
            <person name="Dalin E."/>
            <person name="Tice H."/>
            <person name="Bruce D."/>
            <person name="Goodwin L."/>
            <person name="Pitluck S."/>
            <person name="Kiss H."/>
            <person name="Brettin T."/>
            <person name="Detter J.C."/>
            <person name="Han C."/>
            <person name="Kuske C.R."/>
            <person name="Schmutz J."/>
            <person name="Larimer F."/>
            <person name="Land M."/>
            <person name="Hauser L."/>
            <person name="Kyrpides N."/>
            <person name="Mikhailova N."/>
            <person name="Ingram L."/>
            <person name="Richardson P."/>
        </authorList>
    </citation>
    <scope>NUCLEOTIDE SEQUENCE [LARGE SCALE GENOMIC DNA]</scope>
    <source>
        <strain>ATCC 8739 / DSM 1576 / NBRC 3972 / NCIMB 8545 / WDCM 00012 / Crooks</strain>
    </source>
</reference>
<proteinExistence type="inferred from homology"/>
<comment type="catalytic activity">
    <reaction evidence="1">
        <text>2-(N(omega)-L-arginino)succinate = fumarate + L-arginine</text>
        <dbReference type="Rhea" id="RHEA:24020"/>
        <dbReference type="ChEBI" id="CHEBI:29806"/>
        <dbReference type="ChEBI" id="CHEBI:32682"/>
        <dbReference type="ChEBI" id="CHEBI:57472"/>
        <dbReference type="EC" id="4.3.2.1"/>
    </reaction>
</comment>
<comment type="pathway">
    <text evidence="1">Amino-acid biosynthesis; L-arginine biosynthesis; L-arginine from L-ornithine and carbamoyl phosphate: step 3/3.</text>
</comment>
<comment type="subcellular location">
    <subcellularLocation>
        <location evidence="1">Cytoplasm</location>
    </subcellularLocation>
</comment>
<comment type="similarity">
    <text evidence="1">Belongs to the lyase 1 family. Argininosuccinate lyase subfamily.</text>
</comment>
<evidence type="ECO:0000255" key="1">
    <source>
        <dbReference type="HAMAP-Rule" id="MF_00006"/>
    </source>
</evidence>
<keyword id="KW-0028">Amino-acid biosynthesis</keyword>
<keyword id="KW-0055">Arginine biosynthesis</keyword>
<keyword id="KW-0963">Cytoplasm</keyword>
<keyword id="KW-0456">Lyase</keyword>
<feature type="chain" id="PRO_1000073846" description="Argininosuccinate lyase">
    <location>
        <begin position="1"/>
        <end position="457"/>
    </location>
</feature>
<sequence length="457" mass="50318">MALWGGRFTQAADQRFKQFNDSLRFDYRLAEQDIVGSVAWSKALVTVGVLTAEEQAQLEEALNVLLEDVRARPQQILESDAEDIHSWVEGKLIDKVGQLGKKLHTGRSRNDQVATDLKLWCKDTVSELLTANRQLQSALVETAQNNQDAVMPGYTHLQRAQPVTFAHWCLAYVEMLARDESRLQDALKRLDVSPLGCGALAGTAYEIDREQLAGWLGFASATRNSLDSVSDRDHVLELLSAAAIGMVHLSRFAEDLIFFNTGEAGFVELSDRVTSGSSLMPQKKNPDALELIRGKCGRVQGALTGMMMTLKGLPLAYNKDMQEDKEGLFDALDTWLDCLHMAALVLDGIQVKRPRCQEAAQQGYANATELADYLVAKGVPFREAHHIVGEAVVEAIRQGKPLEDLPLSELQKFSQVIDEDVYPILSLQSCLDKRAAKGGVSPQQVAQAIAFAQARLG</sequence>
<protein>
    <recommendedName>
        <fullName evidence="1">Argininosuccinate lyase</fullName>
        <shortName evidence="1">ASAL</shortName>
        <ecNumber evidence="1">4.3.2.1</ecNumber>
    </recommendedName>
    <alternativeName>
        <fullName evidence="1">Arginosuccinase</fullName>
    </alternativeName>
</protein>
<organism>
    <name type="scientific">Escherichia coli (strain ATCC 8739 / DSM 1576 / NBRC 3972 / NCIMB 8545 / WDCM 00012 / Crooks)</name>
    <dbReference type="NCBI Taxonomy" id="481805"/>
    <lineage>
        <taxon>Bacteria</taxon>
        <taxon>Pseudomonadati</taxon>
        <taxon>Pseudomonadota</taxon>
        <taxon>Gammaproteobacteria</taxon>
        <taxon>Enterobacterales</taxon>
        <taxon>Enterobacteriaceae</taxon>
        <taxon>Escherichia</taxon>
    </lineage>
</organism>
<dbReference type="EC" id="4.3.2.1" evidence="1"/>
<dbReference type="EMBL" id="CP000946">
    <property type="protein sequence ID" value="ACA79655.1"/>
    <property type="molecule type" value="Genomic_DNA"/>
</dbReference>
<dbReference type="RefSeq" id="WP_001230087.1">
    <property type="nucleotide sequence ID" value="NZ_MTFT01000042.1"/>
</dbReference>
<dbReference type="SMR" id="B1IVB8"/>
<dbReference type="KEGG" id="ecl:EcolC_4056"/>
<dbReference type="HOGENOM" id="CLU_027272_2_3_6"/>
<dbReference type="UniPathway" id="UPA00068">
    <property type="reaction ID" value="UER00114"/>
</dbReference>
<dbReference type="GO" id="GO:0005829">
    <property type="term" value="C:cytosol"/>
    <property type="evidence" value="ECO:0007669"/>
    <property type="project" value="TreeGrafter"/>
</dbReference>
<dbReference type="GO" id="GO:0004056">
    <property type="term" value="F:argininosuccinate lyase activity"/>
    <property type="evidence" value="ECO:0007669"/>
    <property type="project" value="UniProtKB-UniRule"/>
</dbReference>
<dbReference type="GO" id="GO:0042450">
    <property type="term" value="P:arginine biosynthetic process via ornithine"/>
    <property type="evidence" value="ECO:0007669"/>
    <property type="project" value="InterPro"/>
</dbReference>
<dbReference type="GO" id="GO:0006526">
    <property type="term" value="P:L-arginine biosynthetic process"/>
    <property type="evidence" value="ECO:0007669"/>
    <property type="project" value="UniProtKB-UniRule"/>
</dbReference>
<dbReference type="CDD" id="cd01359">
    <property type="entry name" value="Argininosuccinate_lyase"/>
    <property type="match status" value="1"/>
</dbReference>
<dbReference type="FunFam" id="1.10.275.10:FF:000004">
    <property type="entry name" value="Argininosuccinate lyase"/>
    <property type="match status" value="1"/>
</dbReference>
<dbReference type="FunFam" id="1.10.40.30:FF:000001">
    <property type="entry name" value="Argininosuccinate lyase"/>
    <property type="match status" value="1"/>
</dbReference>
<dbReference type="FunFam" id="1.20.200.10:FF:000006">
    <property type="entry name" value="Argininosuccinate lyase"/>
    <property type="match status" value="1"/>
</dbReference>
<dbReference type="Gene3D" id="1.10.40.30">
    <property type="entry name" value="Fumarase/aspartase (C-terminal domain)"/>
    <property type="match status" value="1"/>
</dbReference>
<dbReference type="Gene3D" id="1.20.200.10">
    <property type="entry name" value="Fumarase/aspartase (Central domain)"/>
    <property type="match status" value="1"/>
</dbReference>
<dbReference type="Gene3D" id="1.10.275.10">
    <property type="entry name" value="Fumarase/aspartase (N-terminal domain)"/>
    <property type="match status" value="1"/>
</dbReference>
<dbReference type="HAMAP" id="MF_00006">
    <property type="entry name" value="Arg_succ_lyase"/>
    <property type="match status" value="1"/>
</dbReference>
<dbReference type="InterPro" id="IPR029419">
    <property type="entry name" value="Arg_succ_lyase_C"/>
</dbReference>
<dbReference type="InterPro" id="IPR009049">
    <property type="entry name" value="Argininosuccinate_lyase"/>
</dbReference>
<dbReference type="InterPro" id="IPR024083">
    <property type="entry name" value="Fumarase/histidase_N"/>
</dbReference>
<dbReference type="InterPro" id="IPR020557">
    <property type="entry name" value="Fumarate_lyase_CS"/>
</dbReference>
<dbReference type="InterPro" id="IPR000362">
    <property type="entry name" value="Fumarate_lyase_fam"/>
</dbReference>
<dbReference type="InterPro" id="IPR022761">
    <property type="entry name" value="Fumarate_lyase_N"/>
</dbReference>
<dbReference type="InterPro" id="IPR008948">
    <property type="entry name" value="L-Aspartase-like"/>
</dbReference>
<dbReference type="NCBIfam" id="TIGR00838">
    <property type="entry name" value="argH"/>
    <property type="match status" value="1"/>
</dbReference>
<dbReference type="NCBIfam" id="NF008964">
    <property type="entry name" value="PRK12308.1"/>
    <property type="match status" value="1"/>
</dbReference>
<dbReference type="PANTHER" id="PTHR43814">
    <property type="entry name" value="ARGININOSUCCINATE LYASE"/>
    <property type="match status" value="1"/>
</dbReference>
<dbReference type="PANTHER" id="PTHR43814:SF1">
    <property type="entry name" value="ARGININOSUCCINATE LYASE"/>
    <property type="match status" value="1"/>
</dbReference>
<dbReference type="Pfam" id="PF14698">
    <property type="entry name" value="ASL_C2"/>
    <property type="match status" value="1"/>
</dbReference>
<dbReference type="Pfam" id="PF00206">
    <property type="entry name" value="Lyase_1"/>
    <property type="match status" value="1"/>
</dbReference>
<dbReference type="PRINTS" id="PR00145">
    <property type="entry name" value="ARGSUCLYASE"/>
</dbReference>
<dbReference type="PRINTS" id="PR00149">
    <property type="entry name" value="FUMRATELYASE"/>
</dbReference>
<dbReference type="SUPFAM" id="SSF48557">
    <property type="entry name" value="L-aspartase-like"/>
    <property type="match status" value="1"/>
</dbReference>
<dbReference type="PROSITE" id="PS00163">
    <property type="entry name" value="FUMARATE_LYASES"/>
    <property type="match status" value="1"/>
</dbReference>
<name>ARLY_ECOLC</name>
<accession>B1IVB8</accession>
<gene>
    <name evidence="1" type="primary">argH</name>
    <name type="ordered locus">EcolC_4056</name>
</gene>